<gene>
    <name type="primary">Exoc6</name>
    <name type="synonym">Sec15a</name>
    <name type="synonym">Sec15l1</name>
</gene>
<evidence type="ECO:0000250" key="1"/>
<evidence type="ECO:0000250" key="2">
    <source>
        <dbReference type="UniProtKB" id="O54923"/>
    </source>
</evidence>
<evidence type="ECO:0000250" key="3">
    <source>
        <dbReference type="UniProtKB" id="Q8TAG9"/>
    </source>
</evidence>
<evidence type="ECO:0000269" key="4">
    <source>
    </source>
</evidence>
<evidence type="ECO:0000305" key="5"/>
<name>EXOC6_MOUSE</name>
<proteinExistence type="evidence at protein level"/>
<reference key="1">
    <citation type="journal article" date="2004" name="Genome Res.">
        <title>The status, quality, and expansion of the NIH full-length cDNA project: the Mammalian Gene Collection (MGC).</title>
        <authorList>
            <consortium name="The MGC Project Team"/>
        </authorList>
    </citation>
    <scope>NUCLEOTIDE SEQUENCE [LARGE SCALE MRNA]</scope>
</reference>
<reference key="2">
    <citation type="journal article" date="2004" name="J. Biol. Chem.">
        <title>Sec15 is an effector for the Rab11 GTPase in mammalian cells.</title>
        <authorList>
            <person name="Zhang X.-M."/>
            <person name="Ellis S."/>
            <person name="Sriratana A."/>
            <person name="Mitchell C.A."/>
            <person name="Rowe T."/>
        </authorList>
    </citation>
    <scope>INTERACTION WITH RAB11A</scope>
</reference>
<reference key="3">
    <citation type="journal article" date="2010" name="Cell">
        <title>A tissue-specific atlas of mouse protein phosphorylation and expression.</title>
        <authorList>
            <person name="Huttlin E.L."/>
            <person name="Jedrychowski M.P."/>
            <person name="Elias J.E."/>
            <person name="Goswami T."/>
            <person name="Rad R."/>
            <person name="Beausoleil S.A."/>
            <person name="Villen J."/>
            <person name="Haas W."/>
            <person name="Sowa M.E."/>
            <person name="Gygi S.P."/>
        </authorList>
    </citation>
    <scope>IDENTIFICATION BY MASS SPECTROMETRY [LARGE SCALE ANALYSIS]</scope>
    <source>
        <tissue>Brain</tissue>
        <tissue>Heart</tissue>
        <tissue>Spleen</tissue>
        <tissue>Testis</tissue>
    </source>
</reference>
<accession>Q8R313</accession>
<protein>
    <recommendedName>
        <fullName>Exocyst complex component 6</fullName>
    </recommendedName>
    <alternativeName>
        <fullName>Exocyst complex component Sec15A</fullName>
    </alternativeName>
    <alternativeName>
        <fullName>SEC15-like protein 1</fullName>
    </alternativeName>
</protein>
<sequence length="802" mass="93077">MAESCEALGTVPEHERILQEIESTDTACVGPTLRSVYDDQPNAHKKFMEKLDACIRNHDKEIEKMCNFHHQGFVDAITELLKVRADAEKLKVTDTNRRFQDAGKEVIIQTEDIIRCRIQQRNITTVVEKLQLCLPVLEMYSKLKEQMSMKRYYSALKTMEQLENVYFPRVSQYRFCQLMMETLPKLREDMMNYCMSDLTYGLESIRKHSDKIGEAAMKQAQQQKSFSVALQKQNNMRFGKNMHVNNDRILEEKSDVIPKHALEEEAENDEEVLTVQDLVDFSPVYRCLHIYSALGDEETFENYYRKQRKKQARLVLQPQSSVHETVDGYRRYFTQIVGFFVVEDHILHVTQGLVTRVYTEELWNMALSKIIAVLRAHSSYCTDPDLVLELKNLIVIFADTLQGYGFPVNRLFDLLFEIRDQYNETLLKKWAGIFRDIFEEDNYSPIPIGSEEEYKVVISRFPFQDPDLEKQSFPKKFPMSQSVPLIYIQVKEFIYASLKFSESLHRSSTEIDDMLRKSTNLLLTRILSSCLLNLIRKPHIGLTELVQIIINTTHLEQACKYLEDFITNITNISQETVHTTRLYGLSTFKDARHAAEGEIYTKLNQKIDEFVQLADYDWTMAESDGRASGYLMDLINFLRSIFQVFTHLPGKVAQTACMSACQHLSTSLMQMLLDSELKQISMGAVQQFNLDVIQCELFASSEPVPGFQGDTLQLAFIDLRQLLDLFMVWDWSTYLADYGQPASKYLRVNPHAALTLLEKMKDTSKKNNIFAQFRKNDRDRQKLIETVVRQLRGLVTGMSQHT</sequence>
<dbReference type="EMBL" id="BC026859">
    <property type="protein sequence ID" value="AAH26859.1"/>
    <property type="status" value="ALT_INIT"/>
    <property type="molecule type" value="mRNA"/>
</dbReference>
<dbReference type="SMR" id="Q8R313"/>
<dbReference type="ComplexPortal" id="CPX-4982">
    <property type="entry name" value="Exocyst, Exoc6 variant"/>
</dbReference>
<dbReference type="FunCoup" id="Q8R313">
    <property type="interactions" value="527"/>
</dbReference>
<dbReference type="IntAct" id="Q8R313">
    <property type="interactions" value="1"/>
</dbReference>
<dbReference type="MINT" id="Q8R313"/>
<dbReference type="STRING" id="10090.ENSMUSP00000064332"/>
<dbReference type="iPTMnet" id="Q8R313"/>
<dbReference type="PhosphoSitePlus" id="Q8R313"/>
<dbReference type="jPOST" id="Q8R313"/>
<dbReference type="PaxDb" id="10090-ENSMUSP00000064332"/>
<dbReference type="PeptideAtlas" id="Q8R313"/>
<dbReference type="ProteomicsDB" id="275488"/>
<dbReference type="Pumba" id="Q8R313"/>
<dbReference type="AGR" id="MGI:1351611"/>
<dbReference type="MGI" id="MGI:1351611">
    <property type="gene designation" value="Exoc6"/>
</dbReference>
<dbReference type="eggNOG" id="KOG2176">
    <property type="taxonomic scope" value="Eukaryota"/>
</dbReference>
<dbReference type="InParanoid" id="Q8R313"/>
<dbReference type="Reactome" id="R-MMU-264876">
    <property type="pathway name" value="Insulin processing"/>
</dbReference>
<dbReference type="Reactome" id="R-MMU-5620916">
    <property type="pathway name" value="VxPx cargo-targeting to cilium"/>
</dbReference>
<dbReference type="CD-CODE" id="CE726F99">
    <property type="entry name" value="Postsynaptic density"/>
</dbReference>
<dbReference type="ChiTaRS" id="Exoc6">
    <property type="organism name" value="mouse"/>
</dbReference>
<dbReference type="PRO" id="PR:Q8R313"/>
<dbReference type="Proteomes" id="UP000000589">
    <property type="component" value="Unplaced"/>
</dbReference>
<dbReference type="RNAct" id="Q8R313">
    <property type="molecule type" value="protein"/>
</dbReference>
<dbReference type="GO" id="GO:0000145">
    <property type="term" value="C:exocyst"/>
    <property type="evidence" value="ECO:0000303"/>
    <property type="project" value="ComplexPortal"/>
</dbReference>
<dbReference type="GO" id="GO:0090543">
    <property type="term" value="C:Flemming body"/>
    <property type="evidence" value="ECO:0007669"/>
    <property type="project" value="UniProtKB-SubCell"/>
</dbReference>
<dbReference type="GO" id="GO:0030426">
    <property type="term" value="C:growth cone"/>
    <property type="evidence" value="ECO:0007669"/>
    <property type="project" value="UniProtKB-SubCell"/>
</dbReference>
<dbReference type="GO" id="GO:0048471">
    <property type="term" value="C:perinuclear region of cytoplasm"/>
    <property type="evidence" value="ECO:0007669"/>
    <property type="project" value="UniProtKB-SubCell"/>
</dbReference>
<dbReference type="GO" id="GO:0005886">
    <property type="term" value="C:plasma membrane"/>
    <property type="evidence" value="ECO:0000304"/>
    <property type="project" value="Reactome"/>
</dbReference>
<dbReference type="GO" id="GO:0030218">
    <property type="term" value="P:erythrocyte differentiation"/>
    <property type="evidence" value="ECO:0000315"/>
    <property type="project" value="MGI"/>
</dbReference>
<dbReference type="GO" id="GO:0006886">
    <property type="term" value="P:intracellular protein transport"/>
    <property type="evidence" value="ECO:0007669"/>
    <property type="project" value="InterPro"/>
</dbReference>
<dbReference type="GO" id="GO:0090148">
    <property type="term" value="P:membrane fission"/>
    <property type="evidence" value="ECO:0000303"/>
    <property type="project" value="ComplexPortal"/>
</dbReference>
<dbReference type="GO" id="GO:0000281">
    <property type="term" value="P:mitotic cytokinesis"/>
    <property type="evidence" value="ECO:0000303"/>
    <property type="project" value="ComplexPortal"/>
</dbReference>
<dbReference type="GO" id="GO:0006904">
    <property type="term" value="P:vesicle docking involved in exocytosis"/>
    <property type="evidence" value="ECO:0000303"/>
    <property type="project" value="ComplexPortal"/>
</dbReference>
<dbReference type="GO" id="GO:0090522">
    <property type="term" value="P:vesicle tethering involved in exocytosis"/>
    <property type="evidence" value="ECO:0000303"/>
    <property type="project" value="ComplexPortal"/>
</dbReference>
<dbReference type="FunFam" id="1.10.357.30:FF:000001">
    <property type="entry name" value="Exocyst complex component"/>
    <property type="match status" value="1"/>
</dbReference>
<dbReference type="FunFam" id="1.20.58.670:FF:000001">
    <property type="entry name" value="Exocyst complex component"/>
    <property type="match status" value="1"/>
</dbReference>
<dbReference type="Gene3D" id="1.20.58.670">
    <property type="entry name" value="Dsl1p vesicle tethering complex, Tip20p subunit, domain D"/>
    <property type="match status" value="1"/>
</dbReference>
<dbReference type="Gene3D" id="1.10.357.30">
    <property type="entry name" value="Exocyst complex subunit Sec15 C-terminal domain, N-terminal subdomain"/>
    <property type="match status" value="1"/>
</dbReference>
<dbReference type="InterPro" id="IPR007225">
    <property type="entry name" value="EXOC6/Sec15"/>
</dbReference>
<dbReference type="InterPro" id="IPR046361">
    <property type="entry name" value="EXOC6/Sec15_C"/>
</dbReference>
<dbReference type="InterPro" id="IPR042045">
    <property type="entry name" value="EXOC6/Sec15_C_dom1"/>
</dbReference>
<dbReference type="InterPro" id="IPR048359">
    <property type="entry name" value="EXOC6_Sec15_N"/>
</dbReference>
<dbReference type="InterPro" id="IPR042044">
    <property type="entry name" value="EXOC6PINT-1/Sec15/Tip20_C_dom2"/>
</dbReference>
<dbReference type="PANTHER" id="PTHR12702:SF2">
    <property type="entry name" value="EXOCYST COMPLEX COMPONENT 6"/>
    <property type="match status" value="1"/>
</dbReference>
<dbReference type="PANTHER" id="PTHR12702">
    <property type="entry name" value="SEC15"/>
    <property type="match status" value="1"/>
</dbReference>
<dbReference type="Pfam" id="PF20651">
    <property type="entry name" value="EXOC6_Sec15_N"/>
    <property type="match status" value="1"/>
</dbReference>
<dbReference type="Pfam" id="PF04091">
    <property type="entry name" value="Sec15_C"/>
    <property type="match status" value="1"/>
</dbReference>
<dbReference type="PIRSF" id="PIRSF025007">
    <property type="entry name" value="Sec15"/>
    <property type="match status" value="1"/>
</dbReference>
<comment type="function">
    <text evidence="1">Component of the exocyst complex involved in the docking of exocytic vesicles with fusion sites on the plasma membrane. Together with RAB11A, RAB3IP, RAB8A, PARD3, PRKCI, ANXA2, CDC42 and DNMBP promotes transcytosis of PODXL to the apical membrane initiation sites (AMIS), apical surface formation and lumenogenesis.</text>
</comment>
<comment type="subunit">
    <text evidence="1 2 4">The exocyst complex is composed of EXOC1, EXOC2, EXOC3, EXOC4, EXOC5, EXOC6, EXOC7 and EXOC8 (By similarity). Interacts with CNTRL (By similarity). Interacts with RAB11A in a GTP-dependent manner.</text>
</comment>
<comment type="interaction">
    <interactant intactId="EBI-9202179">
        <id>Q8R313</id>
    </interactant>
    <interactant intactId="EBI-2028671">
        <id>Q62739</id>
        <label>Rab3ip</label>
    </interactant>
    <organismsDiffer>true</organismsDiffer>
    <experiments>2</experiments>
</comment>
<comment type="subcellular location">
    <subcellularLocation>
        <location evidence="2">Cytoplasm</location>
    </subcellularLocation>
    <subcellularLocation>
        <location evidence="2">Cytoplasm</location>
        <location evidence="2">Perinuclear region</location>
    </subcellularLocation>
    <subcellularLocation>
        <location evidence="2">Cell projection</location>
        <location evidence="2">Growth cone</location>
    </subcellularLocation>
    <subcellularLocation>
        <location evidence="3">Midbody</location>
        <location evidence="3">Midbody ring</location>
    </subcellularLocation>
    <text evidence="2 3">Perinuclear in undifferentiated cells. Redistributes to growing neurites and growth cones during neuronal differentiation (By similarity). Colocalizes with CNTRL/centriolin at the midbody ring (By similarity).</text>
</comment>
<comment type="similarity">
    <text evidence="5">Belongs to the SEC15 family.</text>
</comment>
<comment type="sequence caution" evidence="5">
    <conflict type="erroneous initiation">
        <sequence resource="EMBL-CDS" id="AAH26859"/>
    </conflict>
</comment>
<keyword id="KW-0966">Cell projection</keyword>
<keyword id="KW-0963">Cytoplasm</keyword>
<keyword id="KW-0268">Exocytosis</keyword>
<keyword id="KW-0653">Protein transport</keyword>
<keyword id="KW-1185">Reference proteome</keyword>
<keyword id="KW-0813">Transport</keyword>
<organism>
    <name type="scientific">Mus musculus</name>
    <name type="common">Mouse</name>
    <dbReference type="NCBI Taxonomy" id="10090"/>
    <lineage>
        <taxon>Eukaryota</taxon>
        <taxon>Metazoa</taxon>
        <taxon>Chordata</taxon>
        <taxon>Craniata</taxon>
        <taxon>Vertebrata</taxon>
        <taxon>Euteleostomi</taxon>
        <taxon>Mammalia</taxon>
        <taxon>Eutheria</taxon>
        <taxon>Euarchontoglires</taxon>
        <taxon>Glires</taxon>
        <taxon>Rodentia</taxon>
        <taxon>Myomorpha</taxon>
        <taxon>Muroidea</taxon>
        <taxon>Muridae</taxon>
        <taxon>Murinae</taxon>
        <taxon>Mus</taxon>
        <taxon>Mus</taxon>
    </lineage>
</organism>
<feature type="chain" id="PRO_0000118952" description="Exocyst complex component 6">
    <location>
        <begin position="1"/>
        <end position="802"/>
    </location>
</feature>